<sequence length="82" mass="8767">MRLVVCLVFLAPFALVCHGQVYKGGYTRPIPRPPPFVRPLPGGPIGPYNGCPVSCRGISFSQARSCCSRLGRCCHVGKGYSG</sequence>
<feature type="signal peptide" evidence="2">
    <location>
        <begin position="1"/>
        <end position="19"/>
    </location>
</feature>
<feature type="chain" id="PRO_0000023510" description="Penaeidin-3e">
    <location>
        <begin position="20"/>
        <end position="81"/>
    </location>
</feature>
<feature type="modified residue" description="Pyrrolidone carboxylic acid" evidence="1">
    <location>
        <position position="20"/>
    </location>
</feature>
<feature type="modified residue" description="Serine amide" evidence="1">
    <location>
        <position position="81"/>
    </location>
</feature>
<feature type="disulfide bond" evidence="1">
    <location>
        <begin position="51"/>
        <end position="66"/>
    </location>
</feature>
<feature type="disulfide bond" evidence="1">
    <location>
        <begin position="55"/>
        <end position="73"/>
    </location>
</feature>
<feature type="disulfide bond" evidence="1">
    <location>
        <begin position="67"/>
        <end position="74"/>
    </location>
</feature>
<accession>Q963C9</accession>
<organism>
    <name type="scientific">Penaeus vannamei</name>
    <name type="common">Whiteleg shrimp</name>
    <name type="synonym">Litopenaeus vannamei</name>
    <dbReference type="NCBI Taxonomy" id="6689"/>
    <lineage>
        <taxon>Eukaryota</taxon>
        <taxon>Metazoa</taxon>
        <taxon>Ecdysozoa</taxon>
        <taxon>Arthropoda</taxon>
        <taxon>Crustacea</taxon>
        <taxon>Multicrustacea</taxon>
        <taxon>Malacostraca</taxon>
        <taxon>Eumalacostraca</taxon>
        <taxon>Eucarida</taxon>
        <taxon>Decapoda</taxon>
        <taxon>Dendrobranchiata</taxon>
        <taxon>Penaeoidea</taxon>
        <taxon>Penaeidae</taxon>
        <taxon>Penaeus</taxon>
    </lineage>
</organism>
<keyword id="KW-0027">Amidation</keyword>
<keyword id="KW-0044">Antibiotic</keyword>
<keyword id="KW-0929">Antimicrobial</keyword>
<keyword id="KW-0147">Chitin-binding</keyword>
<keyword id="KW-1015">Disulfide bond</keyword>
<keyword id="KW-0295">Fungicide</keyword>
<keyword id="KW-0873">Pyrrolidone carboxylic acid</keyword>
<keyword id="KW-0732">Signal</keyword>
<dbReference type="EMBL" id="AF390141">
    <property type="protein sequence ID" value="AAK77534.1"/>
    <property type="molecule type" value="mRNA"/>
</dbReference>
<dbReference type="SMR" id="Q963C9"/>
<dbReference type="GO" id="GO:0005737">
    <property type="term" value="C:cytoplasm"/>
    <property type="evidence" value="ECO:0007669"/>
    <property type="project" value="InterPro"/>
</dbReference>
<dbReference type="GO" id="GO:0008061">
    <property type="term" value="F:chitin binding"/>
    <property type="evidence" value="ECO:0007669"/>
    <property type="project" value="UniProtKB-KW"/>
</dbReference>
<dbReference type="GO" id="GO:0042742">
    <property type="term" value="P:defense response to bacterium"/>
    <property type="evidence" value="ECO:0007669"/>
    <property type="project" value="UniProtKB-KW"/>
</dbReference>
<dbReference type="GO" id="GO:0050832">
    <property type="term" value="P:defense response to fungus"/>
    <property type="evidence" value="ECO:0007669"/>
    <property type="project" value="UniProtKB-KW"/>
</dbReference>
<dbReference type="GO" id="GO:0031640">
    <property type="term" value="P:killing of cells of another organism"/>
    <property type="evidence" value="ECO:0007669"/>
    <property type="project" value="UniProtKB-KW"/>
</dbReference>
<dbReference type="InterPro" id="IPR009226">
    <property type="entry name" value="Penaeidin"/>
</dbReference>
<dbReference type="Pfam" id="PF05927">
    <property type="entry name" value="Penaeidin"/>
    <property type="match status" value="1"/>
</dbReference>
<reference key="1">
    <citation type="journal article" date="2002" name="Immunogenetics">
        <title>Diversity of the penaeidin antimicrobial peptides in two shrimp species.</title>
        <authorList>
            <person name="Cuthbertson B.J."/>
            <person name="Shepard E.F."/>
            <person name="Chapman R.W."/>
            <person name="Gross P.S."/>
        </authorList>
    </citation>
    <scope>NUCLEOTIDE SEQUENCE [MRNA]</scope>
    <source>
        <tissue>Hemocyte</tissue>
    </source>
</reference>
<proteinExistence type="inferred from homology"/>
<protein>
    <recommendedName>
        <fullName>Penaeidin-3e</fullName>
        <shortName>Pen-3e</shortName>
    </recommendedName>
</protein>
<evidence type="ECO:0000250" key="1"/>
<evidence type="ECO:0000255" key="2"/>
<evidence type="ECO:0000305" key="3"/>
<name>PEN3E_PENVA</name>
<comment type="function">
    <text evidence="1">Antibacterial and antifungal activity. Presents chitin-binding activity (By similarity).</text>
</comment>
<comment type="subcellular location">
    <subcellularLocation>
        <location>Cytoplasmic granule</location>
    </subcellularLocation>
    <text>Cytoplasmic granules of hemocytes and to a lesser extent in small granules of hemocytes.</text>
</comment>
<comment type="similarity">
    <text evidence="3">Belongs to the penaeidin family.</text>
</comment>